<gene>
    <name type="primary">rpmG2</name>
    <name type="ordered locus">SAV_4900</name>
</gene>
<reference key="1">
    <citation type="journal article" date="2001" name="Proc. Natl. Acad. Sci. U.S.A.">
        <title>Genome sequence of an industrial microorganism Streptomyces avermitilis: deducing the ability of producing secondary metabolites.</title>
        <authorList>
            <person name="Omura S."/>
            <person name="Ikeda H."/>
            <person name="Ishikawa J."/>
            <person name="Hanamoto A."/>
            <person name="Takahashi C."/>
            <person name="Shinose M."/>
            <person name="Takahashi Y."/>
            <person name="Horikawa H."/>
            <person name="Nakazawa H."/>
            <person name="Osonoe T."/>
            <person name="Kikuchi H."/>
            <person name="Shiba T."/>
            <person name="Sakaki Y."/>
            <person name="Hattori M."/>
        </authorList>
    </citation>
    <scope>NUCLEOTIDE SEQUENCE [LARGE SCALE GENOMIC DNA]</scope>
    <source>
        <strain>ATCC 31267 / DSM 46492 / JCM 5070 / NBRC 14893 / NCIMB 12804 / NRRL 8165 / MA-4680</strain>
    </source>
</reference>
<reference key="2">
    <citation type="journal article" date="2003" name="Nat. Biotechnol.">
        <title>Complete genome sequence and comparative analysis of the industrial microorganism Streptomyces avermitilis.</title>
        <authorList>
            <person name="Ikeda H."/>
            <person name="Ishikawa J."/>
            <person name="Hanamoto A."/>
            <person name="Shinose M."/>
            <person name="Kikuchi H."/>
            <person name="Shiba T."/>
            <person name="Sakaki Y."/>
            <person name="Hattori M."/>
            <person name="Omura S."/>
        </authorList>
    </citation>
    <scope>NUCLEOTIDE SEQUENCE [LARGE SCALE GENOMIC DNA]</scope>
    <source>
        <strain>ATCC 31267 / DSM 46492 / JCM 5070 / NBRC 14893 / NCIMB 12804 / NRRL 8165 / MA-4680</strain>
    </source>
</reference>
<accession>P66234</accession>
<accession>Q9L0M5</accession>
<organism>
    <name type="scientific">Streptomyces avermitilis (strain ATCC 31267 / DSM 46492 / JCM 5070 / NBRC 14893 / NCIMB 12804 / NRRL 8165 / MA-4680)</name>
    <dbReference type="NCBI Taxonomy" id="227882"/>
    <lineage>
        <taxon>Bacteria</taxon>
        <taxon>Bacillati</taxon>
        <taxon>Actinomycetota</taxon>
        <taxon>Actinomycetes</taxon>
        <taxon>Kitasatosporales</taxon>
        <taxon>Streptomycetaceae</taxon>
        <taxon>Streptomyces</taxon>
    </lineage>
</organism>
<protein>
    <recommendedName>
        <fullName evidence="1">Large ribosomal subunit protein bL33B</fullName>
    </recommendedName>
    <alternativeName>
        <fullName>50S ribosomal protein L33 2</fullName>
    </alternativeName>
</protein>
<keyword id="KW-1185">Reference proteome</keyword>
<keyword id="KW-0687">Ribonucleoprotein</keyword>
<keyword id="KW-0689">Ribosomal protein</keyword>
<sequence length="54" mass="6406">MAATDVRPKITLACVECKERNYITKKNRRNNPDRLEMKKHCPRCNAHTAHRETR</sequence>
<dbReference type="EMBL" id="BA000030">
    <property type="protein sequence ID" value="BAC72612.1"/>
    <property type="molecule type" value="Genomic_DNA"/>
</dbReference>
<dbReference type="SMR" id="P66234"/>
<dbReference type="KEGG" id="sma:SAVERM_4900"/>
<dbReference type="eggNOG" id="COG0267">
    <property type="taxonomic scope" value="Bacteria"/>
</dbReference>
<dbReference type="HOGENOM" id="CLU_190949_0_2_11"/>
<dbReference type="OrthoDB" id="21586at2"/>
<dbReference type="Proteomes" id="UP000000428">
    <property type="component" value="Chromosome"/>
</dbReference>
<dbReference type="GO" id="GO:0005737">
    <property type="term" value="C:cytoplasm"/>
    <property type="evidence" value="ECO:0007669"/>
    <property type="project" value="UniProtKB-ARBA"/>
</dbReference>
<dbReference type="GO" id="GO:1990904">
    <property type="term" value="C:ribonucleoprotein complex"/>
    <property type="evidence" value="ECO:0007669"/>
    <property type="project" value="UniProtKB-KW"/>
</dbReference>
<dbReference type="GO" id="GO:0005840">
    <property type="term" value="C:ribosome"/>
    <property type="evidence" value="ECO:0007669"/>
    <property type="project" value="UniProtKB-KW"/>
</dbReference>
<dbReference type="GO" id="GO:0003735">
    <property type="term" value="F:structural constituent of ribosome"/>
    <property type="evidence" value="ECO:0007669"/>
    <property type="project" value="InterPro"/>
</dbReference>
<dbReference type="GO" id="GO:0006412">
    <property type="term" value="P:translation"/>
    <property type="evidence" value="ECO:0007669"/>
    <property type="project" value="UniProtKB-UniRule"/>
</dbReference>
<dbReference type="Gene3D" id="2.20.28.120">
    <property type="entry name" value="Ribosomal protein L33"/>
    <property type="match status" value="1"/>
</dbReference>
<dbReference type="HAMAP" id="MF_00294">
    <property type="entry name" value="Ribosomal_bL33"/>
    <property type="match status" value="1"/>
</dbReference>
<dbReference type="InterPro" id="IPR001705">
    <property type="entry name" value="Ribosomal_bL33"/>
</dbReference>
<dbReference type="InterPro" id="IPR018264">
    <property type="entry name" value="Ribosomal_bL33_CS"/>
</dbReference>
<dbReference type="InterPro" id="IPR038584">
    <property type="entry name" value="Ribosomal_bL33_sf"/>
</dbReference>
<dbReference type="InterPro" id="IPR011332">
    <property type="entry name" value="Ribosomal_zn-bd"/>
</dbReference>
<dbReference type="NCBIfam" id="NF001764">
    <property type="entry name" value="PRK00504.1"/>
    <property type="match status" value="1"/>
</dbReference>
<dbReference type="NCBIfam" id="NF001860">
    <property type="entry name" value="PRK00595.1"/>
    <property type="match status" value="1"/>
</dbReference>
<dbReference type="NCBIfam" id="TIGR01023">
    <property type="entry name" value="rpmG_bact"/>
    <property type="match status" value="1"/>
</dbReference>
<dbReference type="PANTHER" id="PTHR43168">
    <property type="entry name" value="50S RIBOSOMAL PROTEIN L33, CHLOROPLASTIC"/>
    <property type="match status" value="1"/>
</dbReference>
<dbReference type="PANTHER" id="PTHR43168:SF2">
    <property type="entry name" value="LARGE RIBOSOMAL SUBUNIT PROTEIN BL33C"/>
    <property type="match status" value="1"/>
</dbReference>
<dbReference type="Pfam" id="PF00471">
    <property type="entry name" value="Ribosomal_L33"/>
    <property type="match status" value="1"/>
</dbReference>
<dbReference type="SUPFAM" id="SSF57829">
    <property type="entry name" value="Zn-binding ribosomal proteins"/>
    <property type="match status" value="1"/>
</dbReference>
<dbReference type="PROSITE" id="PS00582">
    <property type="entry name" value="RIBOSOMAL_L33"/>
    <property type="match status" value="1"/>
</dbReference>
<proteinExistence type="inferred from homology"/>
<evidence type="ECO:0000255" key="1">
    <source>
        <dbReference type="HAMAP-Rule" id="MF_00294"/>
    </source>
</evidence>
<evidence type="ECO:0000305" key="2"/>
<comment type="similarity">
    <text evidence="2">Belongs to the bacterial ribosomal protein bL33 family.</text>
</comment>
<name>RL332_STRAW</name>
<feature type="chain" id="PRO_0000170240" description="Large ribosomal subunit protein bL33B">
    <location>
        <begin position="1"/>
        <end position="54"/>
    </location>
</feature>